<organism>
    <name type="scientific">Bradyrhizobium sp. (strain BTAi1 / ATCC BAA-1182)</name>
    <dbReference type="NCBI Taxonomy" id="288000"/>
    <lineage>
        <taxon>Bacteria</taxon>
        <taxon>Pseudomonadati</taxon>
        <taxon>Pseudomonadota</taxon>
        <taxon>Alphaproteobacteria</taxon>
        <taxon>Hyphomicrobiales</taxon>
        <taxon>Nitrobacteraceae</taxon>
        <taxon>Bradyrhizobium</taxon>
    </lineage>
</organism>
<comment type="function">
    <text evidence="1">DNA ligase that catalyzes the formation of phosphodiester linkages between 5'-phosphoryl and 3'-hydroxyl groups in double-stranded DNA using NAD as a coenzyme and as the energy source for the reaction. It is essential for DNA replication and repair of damaged DNA.</text>
</comment>
<comment type="catalytic activity">
    <reaction evidence="1">
        <text>NAD(+) + (deoxyribonucleotide)n-3'-hydroxyl + 5'-phospho-(deoxyribonucleotide)m = (deoxyribonucleotide)n+m + AMP + beta-nicotinamide D-nucleotide.</text>
        <dbReference type="EC" id="6.5.1.2"/>
    </reaction>
</comment>
<comment type="cofactor">
    <cofactor evidence="1">
        <name>Mg(2+)</name>
        <dbReference type="ChEBI" id="CHEBI:18420"/>
    </cofactor>
    <cofactor evidence="1">
        <name>Mn(2+)</name>
        <dbReference type="ChEBI" id="CHEBI:29035"/>
    </cofactor>
</comment>
<comment type="similarity">
    <text evidence="1">Belongs to the NAD-dependent DNA ligase family. LigA subfamily.</text>
</comment>
<reference key="1">
    <citation type="journal article" date="2007" name="Science">
        <title>Legumes symbioses: absence of nod genes in photosynthetic bradyrhizobia.</title>
        <authorList>
            <person name="Giraud E."/>
            <person name="Moulin L."/>
            <person name="Vallenet D."/>
            <person name="Barbe V."/>
            <person name="Cytryn E."/>
            <person name="Avarre J.-C."/>
            <person name="Jaubert M."/>
            <person name="Simon D."/>
            <person name="Cartieaux F."/>
            <person name="Prin Y."/>
            <person name="Bena G."/>
            <person name="Hannibal L."/>
            <person name="Fardoux J."/>
            <person name="Kojadinovic M."/>
            <person name="Vuillet L."/>
            <person name="Lajus A."/>
            <person name="Cruveiller S."/>
            <person name="Rouy Z."/>
            <person name="Mangenot S."/>
            <person name="Segurens B."/>
            <person name="Dossat C."/>
            <person name="Franck W.L."/>
            <person name="Chang W.-S."/>
            <person name="Saunders E."/>
            <person name="Bruce D."/>
            <person name="Richardson P."/>
            <person name="Normand P."/>
            <person name="Dreyfus B."/>
            <person name="Pignol D."/>
            <person name="Stacey G."/>
            <person name="Emerich D."/>
            <person name="Vermeglio A."/>
            <person name="Medigue C."/>
            <person name="Sadowsky M."/>
        </authorList>
    </citation>
    <scope>NUCLEOTIDE SEQUENCE [LARGE SCALE GENOMIC DNA]</scope>
    <source>
        <strain>BTAi1 / ATCC BAA-1182</strain>
    </source>
</reference>
<protein>
    <recommendedName>
        <fullName evidence="1">DNA ligase</fullName>
        <ecNumber evidence="1">6.5.1.2</ecNumber>
    </recommendedName>
    <alternativeName>
        <fullName evidence="1">Polydeoxyribonucleotide synthase [NAD(+)]</fullName>
    </alternativeName>
</protein>
<dbReference type="EC" id="6.5.1.2" evidence="1"/>
<dbReference type="EMBL" id="CP000494">
    <property type="protein sequence ID" value="ABQ38086.1"/>
    <property type="molecule type" value="Genomic_DNA"/>
</dbReference>
<dbReference type="RefSeq" id="WP_012046035.1">
    <property type="nucleotide sequence ID" value="NC_009485.1"/>
</dbReference>
<dbReference type="SMR" id="A5EPJ2"/>
<dbReference type="STRING" id="288000.BBta_6162"/>
<dbReference type="KEGG" id="bbt:BBta_6162"/>
<dbReference type="eggNOG" id="COG0272">
    <property type="taxonomic scope" value="Bacteria"/>
</dbReference>
<dbReference type="HOGENOM" id="CLU_007764_2_1_5"/>
<dbReference type="OrthoDB" id="9759736at2"/>
<dbReference type="Proteomes" id="UP000000246">
    <property type="component" value="Chromosome"/>
</dbReference>
<dbReference type="GO" id="GO:0005829">
    <property type="term" value="C:cytosol"/>
    <property type="evidence" value="ECO:0007669"/>
    <property type="project" value="TreeGrafter"/>
</dbReference>
<dbReference type="GO" id="GO:0003911">
    <property type="term" value="F:DNA ligase (NAD+) activity"/>
    <property type="evidence" value="ECO:0007669"/>
    <property type="project" value="UniProtKB-UniRule"/>
</dbReference>
<dbReference type="GO" id="GO:0046872">
    <property type="term" value="F:metal ion binding"/>
    <property type="evidence" value="ECO:0007669"/>
    <property type="project" value="UniProtKB-KW"/>
</dbReference>
<dbReference type="GO" id="GO:0006281">
    <property type="term" value="P:DNA repair"/>
    <property type="evidence" value="ECO:0007669"/>
    <property type="project" value="UniProtKB-KW"/>
</dbReference>
<dbReference type="GO" id="GO:0006260">
    <property type="term" value="P:DNA replication"/>
    <property type="evidence" value="ECO:0007669"/>
    <property type="project" value="UniProtKB-KW"/>
</dbReference>
<dbReference type="CDD" id="cd17748">
    <property type="entry name" value="BRCT_DNA_ligase_like"/>
    <property type="match status" value="1"/>
</dbReference>
<dbReference type="CDD" id="cd00114">
    <property type="entry name" value="LIGANc"/>
    <property type="match status" value="1"/>
</dbReference>
<dbReference type="FunFam" id="1.10.150.20:FF:000007">
    <property type="entry name" value="DNA ligase"/>
    <property type="match status" value="1"/>
</dbReference>
<dbReference type="FunFam" id="3.30.470.30:FF:000001">
    <property type="entry name" value="DNA ligase"/>
    <property type="match status" value="1"/>
</dbReference>
<dbReference type="Gene3D" id="6.20.10.30">
    <property type="match status" value="1"/>
</dbReference>
<dbReference type="Gene3D" id="1.10.150.20">
    <property type="entry name" value="5' to 3' exonuclease, C-terminal subdomain"/>
    <property type="match status" value="2"/>
</dbReference>
<dbReference type="Gene3D" id="3.40.50.10190">
    <property type="entry name" value="BRCT domain"/>
    <property type="match status" value="1"/>
</dbReference>
<dbReference type="Gene3D" id="3.30.470.30">
    <property type="entry name" value="DNA ligase/mRNA capping enzyme"/>
    <property type="match status" value="1"/>
</dbReference>
<dbReference type="Gene3D" id="1.10.287.610">
    <property type="entry name" value="Helix hairpin bin"/>
    <property type="match status" value="1"/>
</dbReference>
<dbReference type="Gene3D" id="2.40.50.140">
    <property type="entry name" value="Nucleic acid-binding proteins"/>
    <property type="match status" value="1"/>
</dbReference>
<dbReference type="HAMAP" id="MF_01588">
    <property type="entry name" value="DNA_ligase_A"/>
    <property type="match status" value="1"/>
</dbReference>
<dbReference type="InterPro" id="IPR001357">
    <property type="entry name" value="BRCT_dom"/>
</dbReference>
<dbReference type="InterPro" id="IPR036420">
    <property type="entry name" value="BRCT_dom_sf"/>
</dbReference>
<dbReference type="InterPro" id="IPR041663">
    <property type="entry name" value="DisA/LigA_HHH"/>
</dbReference>
<dbReference type="InterPro" id="IPR001679">
    <property type="entry name" value="DNA_ligase"/>
</dbReference>
<dbReference type="InterPro" id="IPR018239">
    <property type="entry name" value="DNA_ligase_AS"/>
</dbReference>
<dbReference type="InterPro" id="IPR033136">
    <property type="entry name" value="DNA_ligase_CS"/>
</dbReference>
<dbReference type="InterPro" id="IPR013839">
    <property type="entry name" value="DNAligase_adenylation"/>
</dbReference>
<dbReference type="InterPro" id="IPR013840">
    <property type="entry name" value="DNAligase_N"/>
</dbReference>
<dbReference type="InterPro" id="IPR012340">
    <property type="entry name" value="NA-bd_OB-fold"/>
</dbReference>
<dbReference type="InterPro" id="IPR004150">
    <property type="entry name" value="NAD_DNA_ligase_OB"/>
</dbReference>
<dbReference type="InterPro" id="IPR010994">
    <property type="entry name" value="RuvA_2-like"/>
</dbReference>
<dbReference type="NCBIfam" id="TIGR00575">
    <property type="entry name" value="dnlj"/>
    <property type="match status" value="1"/>
</dbReference>
<dbReference type="NCBIfam" id="NF005932">
    <property type="entry name" value="PRK07956.1"/>
    <property type="match status" value="1"/>
</dbReference>
<dbReference type="PANTHER" id="PTHR23389">
    <property type="entry name" value="CHROMOSOME TRANSMISSION FIDELITY FACTOR 18"/>
    <property type="match status" value="1"/>
</dbReference>
<dbReference type="PANTHER" id="PTHR23389:SF9">
    <property type="entry name" value="DNA LIGASE"/>
    <property type="match status" value="1"/>
</dbReference>
<dbReference type="Pfam" id="PF00533">
    <property type="entry name" value="BRCT"/>
    <property type="match status" value="1"/>
</dbReference>
<dbReference type="Pfam" id="PF01653">
    <property type="entry name" value="DNA_ligase_aden"/>
    <property type="match status" value="1"/>
</dbReference>
<dbReference type="Pfam" id="PF03120">
    <property type="entry name" value="DNA_ligase_OB"/>
    <property type="match status" value="1"/>
</dbReference>
<dbReference type="Pfam" id="PF12826">
    <property type="entry name" value="HHH_2"/>
    <property type="match status" value="1"/>
</dbReference>
<dbReference type="PIRSF" id="PIRSF001604">
    <property type="entry name" value="LigA"/>
    <property type="match status" value="1"/>
</dbReference>
<dbReference type="SMART" id="SM00292">
    <property type="entry name" value="BRCT"/>
    <property type="match status" value="1"/>
</dbReference>
<dbReference type="SMART" id="SM00532">
    <property type="entry name" value="LIGANc"/>
    <property type="match status" value="1"/>
</dbReference>
<dbReference type="SUPFAM" id="SSF52113">
    <property type="entry name" value="BRCT domain"/>
    <property type="match status" value="1"/>
</dbReference>
<dbReference type="SUPFAM" id="SSF56091">
    <property type="entry name" value="DNA ligase/mRNA capping enzyme, catalytic domain"/>
    <property type="match status" value="1"/>
</dbReference>
<dbReference type="SUPFAM" id="SSF50249">
    <property type="entry name" value="Nucleic acid-binding proteins"/>
    <property type="match status" value="1"/>
</dbReference>
<dbReference type="SUPFAM" id="SSF47781">
    <property type="entry name" value="RuvA domain 2-like"/>
    <property type="match status" value="1"/>
</dbReference>
<dbReference type="PROSITE" id="PS50172">
    <property type="entry name" value="BRCT"/>
    <property type="match status" value="1"/>
</dbReference>
<dbReference type="PROSITE" id="PS01055">
    <property type="entry name" value="DNA_LIGASE_N1"/>
    <property type="match status" value="1"/>
</dbReference>
<dbReference type="PROSITE" id="PS01056">
    <property type="entry name" value="DNA_LIGASE_N2"/>
    <property type="match status" value="1"/>
</dbReference>
<proteinExistence type="inferred from homology"/>
<evidence type="ECO:0000255" key="1">
    <source>
        <dbReference type="HAMAP-Rule" id="MF_01588"/>
    </source>
</evidence>
<sequence>MPKTAKPKKPVDVAELTKAQAKVEWKRLALELEVHDRLYYQDDAPKISDAEYDELRRRFNAIETRFPELVSSESPSQKVGASPSGRFKKVRHAVPMLSLDNAFAEEDVRDFVGRIARFLKLADDRIDFSAEPKIDGLSMSLRYEGGELVTAATRGDGAEGEDVTANIRTLKDVPQKLHGRNWPDVCEVRGEVYMTKQAFLALNERQKEAGDTIFANPRNSAAGSLRQKDPAITASRPLGFFAYAWGEISGTPPAETQTGMIKWFEQCGFTTNPLTRLCHSVEELIAFHRSIEEQRAELDYDIDGVVYKVDRIDWQERLGFVSRTPRWAIAHKFPAERAMTVLKDIEIQVGRTGSLTPVGKLEPVGVGGVIVQNVTLHNEDYIKGIGNKGEVLREGRDIRIGDTVVIQRAGDVIPQVVDVVIDKRPAQARPFHLPKTCPCPLHTDVVREETATGEEGSRARCTGEFACPYQKIEHLKLFASRRAFDIDGLGEKQIAFFFEQGWVKEPADIFTLQKRNAGLKLEEIEGYGETSVRNLFNAIDARREIALERFIYALGMRHVGETTALALARGYGSWDAFHEACLKVAAGDEEAIAEMDALDQIGDTVIKSVAAYFAEDHNRGIVERLTQEVKILDAEKPKRHSPIATKTVVFTGTLEKMTRDEAKATAERLGAKVSGSVSKKTDYVVAGPGAGSKLKEAQKHGVQVLTEDEWLQLIAE</sequence>
<accession>A5EPJ2</accession>
<gene>
    <name evidence="1" type="primary">ligA</name>
    <name type="ordered locus">BBta_6162</name>
</gene>
<keyword id="KW-0227">DNA damage</keyword>
<keyword id="KW-0234">DNA repair</keyword>
<keyword id="KW-0235">DNA replication</keyword>
<keyword id="KW-0436">Ligase</keyword>
<keyword id="KW-0460">Magnesium</keyword>
<keyword id="KW-0464">Manganese</keyword>
<keyword id="KW-0479">Metal-binding</keyword>
<keyword id="KW-0520">NAD</keyword>
<keyword id="KW-1185">Reference proteome</keyword>
<keyword id="KW-0862">Zinc</keyword>
<name>DNLJ_BRASB</name>
<feature type="chain" id="PRO_0000313150" description="DNA ligase">
    <location>
        <begin position="1"/>
        <end position="716"/>
    </location>
</feature>
<feature type="domain" description="BRCT" evidence="1">
    <location>
        <begin position="638"/>
        <end position="716"/>
    </location>
</feature>
<feature type="active site" description="N6-AMP-lysine intermediate" evidence="1">
    <location>
        <position position="133"/>
    </location>
</feature>
<feature type="binding site" evidence="1">
    <location>
        <begin position="49"/>
        <end position="53"/>
    </location>
    <ligand>
        <name>NAD(+)</name>
        <dbReference type="ChEBI" id="CHEBI:57540"/>
    </ligand>
</feature>
<feature type="binding site" evidence="1">
    <location>
        <begin position="98"/>
        <end position="99"/>
    </location>
    <ligand>
        <name>NAD(+)</name>
        <dbReference type="ChEBI" id="CHEBI:57540"/>
    </ligand>
</feature>
<feature type="binding site" evidence="1">
    <location>
        <position position="131"/>
    </location>
    <ligand>
        <name>NAD(+)</name>
        <dbReference type="ChEBI" id="CHEBI:57540"/>
    </ligand>
</feature>
<feature type="binding site" evidence="1">
    <location>
        <position position="154"/>
    </location>
    <ligand>
        <name>NAD(+)</name>
        <dbReference type="ChEBI" id="CHEBI:57540"/>
    </ligand>
</feature>
<feature type="binding site" evidence="1">
    <location>
        <position position="191"/>
    </location>
    <ligand>
        <name>NAD(+)</name>
        <dbReference type="ChEBI" id="CHEBI:57540"/>
    </ligand>
</feature>
<feature type="binding site" evidence="1">
    <location>
        <position position="308"/>
    </location>
    <ligand>
        <name>NAD(+)</name>
        <dbReference type="ChEBI" id="CHEBI:57540"/>
    </ligand>
</feature>
<feature type="binding site" evidence="1">
    <location>
        <position position="332"/>
    </location>
    <ligand>
        <name>NAD(+)</name>
        <dbReference type="ChEBI" id="CHEBI:57540"/>
    </ligand>
</feature>
<feature type="binding site" evidence="1">
    <location>
        <position position="437"/>
    </location>
    <ligand>
        <name>Zn(2+)</name>
        <dbReference type="ChEBI" id="CHEBI:29105"/>
    </ligand>
</feature>
<feature type="binding site" evidence="1">
    <location>
        <position position="439"/>
    </location>
    <ligand>
        <name>Zn(2+)</name>
        <dbReference type="ChEBI" id="CHEBI:29105"/>
    </ligand>
</feature>
<feature type="binding site" evidence="1">
    <location>
        <position position="461"/>
    </location>
    <ligand>
        <name>Zn(2+)</name>
        <dbReference type="ChEBI" id="CHEBI:29105"/>
    </ligand>
</feature>
<feature type="binding site" evidence="1">
    <location>
        <position position="467"/>
    </location>
    <ligand>
        <name>Zn(2+)</name>
        <dbReference type="ChEBI" id="CHEBI:29105"/>
    </ligand>
</feature>